<feature type="chain" id="PRO_0000055156" description="ATP-dependent RNA helicase A">
    <location>
        <begin position="1"/>
        <end position="1287"/>
    </location>
</feature>
<feature type="domain" description="DRBM 1" evidence="2 4">
    <location>
        <begin position="3"/>
        <end position="71"/>
    </location>
</feature>
<feature type="domain" description="DRBM 2" evidence="2 4">
    <location>
        <begin position="177"/>
        <end position="249"/>
    </location>
</feature>
<feature type="domain" description="Helicase ATP-binding" evidence="2 5">
    <location>
        <begin position="395"/>
        <end position="561"/>
    </location>
</feature>
<feature type="domain" description="Helicase C-terminal" evidence="6">
    <location>
        <begin position="633"/>
        <end position="806"/>
    </location>
</feature>
<feature type="region of interest" description="Interaction with CREBBP" evidence="2">
    <location>
        <begin position="1"/>
        <end position="247"/>
    </location>
</feature>
<feature type="region of interest" description="siRNA-binding" evidence="2">
    <location>
        <begin position="5"/>
        <end position="9"/>
    </location>
</feature>
<feature type="region of interest" description="siRNA-binding" evidence="2">
    <location>
        <begin position="53"/>
        <end position="55"/>
    </location>
</feature>
<feature type="region of interest" description="Disordered" evidence="7">
    <location>
        <begin position="82"/>
        <end position="133"/>
    </location>
</feature>
<feature type="region of interest" description="siRNA-binding" evidence="2">
    <location>
        <begin position="179"/>
        <end position="183"/>
    </location>
</feature>
<feature type="region of interest" description="Interaction with BRCA1" evidence="2">
    <location>
        <begin position="227"/>
        <end position="322"/>
    </location>
</feature>
<feature type="region of interest" description="siRNA-binding" evidence="2">
    <location>
        <begin position="231"/>
        <end position="233"/>
    </location>
</feature>
<feature type="region of interest" description="Necessary for interaction with RNA polymerase II holoenzyme" evidence="2">
    <location>
        <begin position="252"/>
        <end position="661"/>
    </location>
</feature>
<feature type="region of interest" description="Necessary for interaction with H2AX" evidence="2">
    <location>
        <begin position="310"/>
        <end position="949"/>
    </location>
</feature>
<feature type="region of interest" description="MTAD" evidence="2">
    <location>
        <begin position="328"/>
        <end position="377"/>
    </location>
</feature>
<feature type="region of interest" description="Core helicase" evidence="2">
    <location>
        <begin position="395"/>
        <end position="806"/>
    </location>
</feature>
<feature type="region of interest" description="HA2" evidence="2">
    <location>
        <begin position="828"/>
        <end position="916"/>
    </location>
</feature>
<feature type="region of interest" description="OB-fold" evidence="2">
    <location>
        <begin position="955"/>
        <end position="1071"/>
    </location>
</feature>
<feature type="region of interest" description="NTD region" evidence="2">
    <location>
        <begin position="1147"/>
        <end position="1276"/>
    </location>
</feature>
<feature type="region of interest" description="RGG" evidence="2">
    <location>
        <begin position="1148"/>
        <end position="1287"/>
    </location>
</feature>
<feature type="region of interest" description="Disordered" evidence="7">
    <location>
        <begin position="1253"/>
        <end position="1287"/>
    </location>
</feature>
<feature type="short sequence motif" description="DEIH box">
    <location>
        <begin position="508"/>
        <end position="511"/>
    </location>
</feature>
<feature type="short sequence motif" description="Nuclear localization signal (NLS1)" evidence="3">
    <location>
        <begin position="583"/>
        <end position="592"/>
    </location>
</feature>
<feature type="short sequence motif" description="Nuclear localization signal (NLS2)" evidence="2">
    <location>
        <begin position="1152"/>
        <end position="1170"/>
    </location>
</feature>
<feature type="compositionally biased region" description="Low complexity" evidence="7">
    <location>
        <begin position="91"/>
        <end position="103"/>
    </location>
</feature>
<feature type="binding site" evidence="2 5">
    <location>
        <begin position="408"/>
        <end position="416"/>
    </location>
    <ligand>
        <name>ATP</name>
        <dbReference type="ChEBI" id="CHEBI:30616"/>
    </ligand>
</feature>
<feature type="binding site" evidence="2">
    <location>
        <position position="415"/>
    </location>
    <ligand>
        <name>Mn(2+)</name>
        <dbReference type="ChEBI" id="CHEBI:29035"/>
    </ligand>
</feature>
<feature type="binding site" evidence="2">
    <location>
        <position position="509"/>
    </location>
    <ligand>
        <name>Mn(2+)</name>
        <dbReference type="ChEBI" id="CHEBI:29035"/>
    </ligand>
</feature>
<feature type="modified residue" description="Phosphoserine" evidence="2">
    <location>
        <position position="125"/>
    </location>
</feature>
<feature type="modified residue" description="N6-acetyllysine; alternate" evidence="1">
    <location>
        <position position="143"/>
    </location>
</feature>
<feature type="modified residue" description="N6-methyllysine; alternate" evidence="2">
    <location>
        <position position="143"/>
    </location>
</feature>
<feature type="modified residue" description="N6-acetyllysine" evidence="2">
    <location>
        <position position="188"/>
    </location>
</feature>
<feature type="modified residue" description="N6-acetyllysine" evidence="2">
    <location>
        <position position="196"/>
    </location>
</feature>
<feature type="modified residue" description="Phosphoserine" evidence="2">
    <location>
        <position position="318"/>
    </location>
</feature>
<feature type="modified residue" description="Phosphoserine" evidence="2">
    <location>
        <position position="446"/>
    </location>
</feature>
<feature type="modified residue" description="Phosphoserine" evidence="2">
    <location>
        <position position="503"/>
    </location>
</feature>
<feature type="modified residue" description="N6-acetyllysine" evidence="2">
    <location>
        <position position="1021"/>
    </location>
</feature>
<feature type="modified residue" description="Asymmetric dimethylarginine" evidence="1">
    <location>
        <position position="1163"/>
    </location>
</feature>
<feature type="modified residue" description="Omega-N-methylarginine" evidence="2">
    <location>
        <position position="1172"/>
    </location>
</feature>
<feature type="modified residue" description="Asymmetric dimethylarginine" evidence="1">
    <location>
        <position position="1235"/>
    </location>
</feature>
<feature type="modified residue" description="Asymmetric dimethylarginine" evidence="1">
    <location>
        <position position="1251"/>
    </location>
</feature>
<feature type="modified residue" description="Asymmetric dimethylarginine" evidence="1">
    <location>
        <position position="1259"/>
    </location>
</feature>
<feature type="modified residue" description="Asymmetric dimethylarginine" evidence="1">
    <location>
        <position position="1266"/>
    </location>
</feature>
<feature type="modified residue" description="Asymmetric dimethylarginine" evidence="1">
    <location>
        <position position="1282"/>
    </location>
</feature>
<feature type="cross-link" description="Glycyl lysine isopeptide (Lys-Gly) (interchain with G-Cter in SUMO2)" evidence="2">
    <location>
        <position position="694"/>
    </location>
</feature>
<protein>
    <recommendedName>
        <fullName evidence="2">ATP-dependent RNA helicase A</fullName>
        <ecNumber evidence="2">3.6.4.13</ecNumber>
    </recommendedName>
    <alternativeName>
        <fullName evidence="1">DEAH box protein 9</fullName>
    </alternativeName>
    <alternativeName>
        <fullName evidence="2">Nuclear DNA helicase II</fullName>
        <shortName evidence="2">NDH II</shortName>
    </alternativeName>
</protein>
<gene>
    <name evidence="2" type="primary">DHX9</name>
    <name evidence="2" type="synonym">DDX9</name>
    <name type="synonym">NDH2</name>
</gene>
<dbReference type="EC" id="3.6.4.13" evidence="2"/>
<dbReference type="EMBL" id="X82829">
    <property type="protein sequence ID" value="CAA58036.1"/>
    <property type="molecule type" value="mRNA"/>
</dbReference>
<dbReference type="PIR" id="I46032">
    <property type="entry name" value="I46032"/>
</dbReference>
<dbReference type="RefSeq" id="NP_776461.1">
    <property type="nucleotide sequence ID" value="NM_174036.2"/>
</dbReference>
<dbReference type="BMRB" id="Q28141"/>
<dbReference type="SMR" id="Q28141"/>
<dbReference type="BioGRID" id="158477">
    <property type="interactions" value="1"/>
</dbReference>
<dbReference type="FunCoup" id="Q28141">
    <property type="interactions" value="4243"/>
</dbReference>
<dbReference type="IntAct" id="Q28141">
    <property type="interactions" value="2"/>
</dbReference>
<dbReference type="STRING" id="9913.ENSBTAP00000026409"/>
<dbReference type="PaxDb" id="9913-ENSBTAP00000026409"/>
<dbReference type="PeptideAtlas" id="Q28141"/>
<dbReference type="GeneID" id="281115"/>
<dbReference type="KEGG" id="bta:281115"/>
<dbReference type="CTD" id="1660"/>
<dbReference type="VEuPathDB" id="HostDB:ENSBTAG00000019821"/>
<dbReference type="eggNOG" id="KOG0921">
    <property type="taxonomic scope" value="Eukaryota"/>
</dbReference>
<dbReference type="InParanoid" id="Q28141"/>
<dbReference type="OMA" id="ANWNTWH"/>
<dbReference type="OrthoDB" id="5600252at2759"/>
<dbReference type="Reactome" id="R-BTA-1810476">
    <property type="pathway name" value="RIP-mediated NFkB activation via ZBP1"/>
</dbReference>
<dbReference type="Reactome" id="R-BTA-3134963">
    <property type="pathway name" value="DEx/H-box helicases activate type I IFN and inflammatory cytokines production"/>
</dbReference>
<dbReference type="Reactome" id="R-BTA-72163">
    <property type="pathway name" value="mRNA Splicing - Major Pathway"/>
</dbReference>
<dbReference type="Reactome" id="R-BTA-9833482">
    <property type="pathway name" value="PKR-mediated signaling"/>
</dbReference>
<dbReference type="CD-CODE" id="D7FE2080">
    <property type="entry name" value="Nucleolus"/>
</dbReference>
<dbReference type="Proteomes" id="UP000009136">
    <property type="component" value="Chromosome 16"/>
</dbReference>
<dbReference type="Bgee" id="ENSBTAG00000019821">
    <property type="expression patterns" value="Expressed in spermatocyte and 107 other cell types or tissues"/>
</dbReference>
<dbReference type="GO" id="GO:0015629">
    <property type="term" value="C:actin cytoskeleton"/>
    <property type="evidence" value="ECO:0000250"/>
    <property type="project" value="UniProtKB"/>
</dbReference>
<dbReference type="GO" id="GO:0005813">
    <property type="term" value="C:centrosome"/>
    <property type="evidence" value="ECO:0007669"/>
    <property type="project" value="UniProtKB-SubCell"/>
</dbReference>
<dbReference type="GO" id="GO:0070937">
    <property type="term" value="C:CRD-mediated mRNA stability complex"/>
    <property type="evidence" value="ECO:0000250"/>
    <property type="project" value="UniProtKB"/>
</dbReference>
<dbReference type="GO" id="GO:0005737">
    <property type="term" value="C:cytoplasm"/>
    <property type="evidence" value="ECO:0000250"/>
    <property type="project" value="UniProtKB"/>
</dbReference>
<dbReference type="GO" id="GO:0036464">
    <property type="term" value="C:cytoplasmic ribonucleoprotein granule"/>
    <property type="evidence" value="ECO:0000250"/>
    <property type="project" value="UniProtKB"/>
</dbReference>
<dbReference type="GO" id="GO:0016604">
    <property type="term" value="C:nuclear body"/>
    <property type="evidence" value="ECO:0000250"/>
    <property type="project" value="UniProtKB"/>
</dbReference>
<dbReference type="GO" id="GO:0097165">
    <property type="term" value="C:nuclear stress granule"/>
    <property type="evidence" value="ECO:0000250"/>
    <property type="project" value="UniProtKB"/>
</dbReference>
<dbReference type="GO" id="GO:0005730">
    <property type="term" value="C:nucleolus"/>
    <property type="evidence" value="ECO:0000318"/>
    <property type="project" value="GO_Central"/>
</dbReference>
<dbReference type="GO" id="GO:0005654">
    <property type="term" value="C:nucleoplasm"/>
    <property type="evidence" value="ECO:0000250"/>
    <property type="project" value="UniProtKB"/>
</dbReference>
<dbReference type="GO" id="GO:0005634">
    <property type="term" value="C:nucleus"/>
    <property type="evidence" value="ECO:0000250"/>
    <property type="project" value="UniProtKB"/>
</dbReference>
<dbReference type="GO" id="GO:0005726">
    <property type="term" value="C:perichromatin fibrils"/>
    <property type="evidence" value="ECO:0000250"/>
    <property type="project" value="UniProtKB"/>
</dbReference>
<dbReference type="GO" id="GO:1990904">
    <property type="term" value="C:ribonucleoprotein complex"/>
    <property type="evidence" value="ECO:0000250"/>
    <property type="project" value="UniProtKB"/>
</dbReference>
<dbReference type="GO" id="GO:0016442">
    <property type="term" value="C:RISC complex"/>
    <property type="evidence" value="ECO:0000250"/>
    <property type="project" value="UniProtKB"/>
</dbReference>
<dbReference type="GO" id="GO:0070578">
    <property type="term" value="C:RISC-loading complex"/>
    <property type="evidence" value="ECO:0000250"/>
    <property type="project" value="UniProtKB"/>
</dbReference>
<dbReference type="GO" id="GO:0043138">
    <property type="term" value="F:3'-5' DNA helicase activity"/>
    <property type="evidence" value="ECO:0000314"/>
    <property type="project" value="UniProtKB"/>
</dbReference>
<dbReference type="GO" id="GO:0033679">
    <property type="term" value="F:3'-5' DNA/RNA helicase activity"/>
    <property type="evidence" value="ECO:0000250"/>
    <property type="project" value="UniProtKB"/>
</dbReference>
<dbReference type="GO" id="GO:0034458">
    <property type="term" value="F:3'-5' RNA helicase activity"/>
    <property type="evidence" value="ECO:0000250"/>
    <property type="project" value="UniProtKB"/>
</dbReference>
<dbReference type="GO" id="GO:0005524">
    <property type="term" value="F:ATP binding"/>
    <property type="evidence" value="ECO:0007669"/>
    <property type="project" value="UniProtKB-KW"/>
</dbReference>
<dbReference type="GO" id="GO:0016887">
    <property type="term" value="F:ATP hydrolysis activity"/>
    <property type="evidence" value="ECO:0000314"/>
    <property type="project" value="UniProtKB"/>
</dbReference>
<dbReference type="GO" id="GO:0140640">
    <property type="term" value="F:catalytic activity, acting on a nucleic acid"/>
    <property type="evidence" value="ECO:0000250"/>
    <property type="project" value="UniProtKB"/>
</dbReference>
<dbReference type="GO" id="GO:0031490">
    <property type="term" value="F:chromatin DNA binding"/>
    <property type="evidence" value="ECO:0000250"/>
    <property type="project" value="UniProtKB"/>
</dbReference>
<dbReference type="GO" id="GO:0003677">
    <property type="term" value="F:DNA binding"/>
    <property type="evidence" value="ECO:0000314"/>
    <property type="project" value="UniProtKB"/>
</dbReference>
<dbReference type="GO" id="GO:0003688">
    <property type="term" value="F:DNA replication origin binding"/>
    <property type="evidence" value="ECO:0000250"/>
    <property type="project" value="UniProtKB"/>
</dbReference>
<dbReference type="GO" id="GO:0003690">
    <property type="term" value="F:double-stranded DNA binding"/>
    <property type="evidence" value="ECO:0000250"/>
    <property type="project" value="UniProtKB"/>
</dbReference>
<dbReference type="GO" id="GO:0003725">
    <property type="term" value="F:double-stranded RNA binding"/>
    <property type="evidence" value="ECO:0000250"/>
    <property type="project" value="UniProtKB"/>
</dbReference>
<dbReference type="GO" id="GO:0061676">
    <property type="term" value="F:importin-alpha family protein binding"/>
    <property type="evidence" value="ECO:0000250"/>
    <property type="project" value="UniProtKB"/>
</dbReference>
<dbReference type="GO" id="GO:0046872">
    <property type="term" value="F:metal ion binding"/>
    <property type="evidence" value="ECO:0007669"/>
    <property type="project" value="UniProtKB-KW"/>
</dbReference>
<dbReference type="GO" id="GO:0003729">
    <property type="term" value="F:mRNA binding"/>
    <property type="evidence" value="ECO:0000250"/>
    <property type="project" value="UniProtKB"/>
</dbReference>
<dbReference type="GO" id="GO:0047429">
    <property type="term" value="F:nucleoside triphosphate diphosphatase activity"/>
    <property type="evidence" value="ECO:0000250"/>
    <property type="project" value="UniProtKB"/>
</dbReference>
<dbReference type="GO" id="GO:1990841">
    <property type="term" value="F:promoter-specific chromatin binding"/>
    <property type="evidence" value="ECO:0000250"/>
    <property type="project" value="UniProtKB"/>
</dbReference>
<dbReference type="GO" id="GO:0017111">
    <property type="term" value="F:ribonucleoside triphosphate phosphatase activity"/>
    <property type="evidence" value="ECO:0000314"/>
    <property type="project" value="UniProtKB"/>
</dbReference>
<dbReference type="GO" id="GO:1905172">
    <property type="term" value="F:RISC complex binding"/>
    <property type="evidence" value="ECO:0000250"/>
    <property type="project" value="UniProtKB"/>
</dbReference>
<dbReference type="GO" id="GO:0003723">
    <property type="term" value="F:RNA binding"/>
    <property type="evidence" value="ECO:0000314"/>
    <property type="project" value="UniProtKB"/>
</dbReference>
<dbReference type="GO" id="GO:0003724">
    <property type="term" value="F:RNA helicase activity"/>
    <property type="evidence" value="ECO:0000314"/>
    <property type="project" value="UniProtKB"/>
</dbReference>
<dbReference type="GO" id="GO:0070063">
    <property type="term" value="F:RNA polymerase binding"/>
    <property type="evidence" value="ECO:0000250"/>
    <property type="project" value="UniProtKB"/>
</dbReference>
<dbReference type="GO" id="GO:0000978">
    <property type="term" value="F:RNA polymerase II cis-regulatory region sequence-specific DNA binding"/>
    <property type="evidence" value="ECO:0000250"/>
    <property type="project" value="UniProtKB"/>
</dbReference>
<dbReference type="GO" id="GO:0035613">
    <property type="term" value="F:RNA stem-loop binding"/>
    <property type="evidence" value="ECO:0000250"/>
    <property type="project" value="UniProtKB"/>
</dbReference>
<dbReference type="GO" id="GO:1990825">
    <property type="term" value="F:sequence-specific mRNA binding"/>
    <property type="evidence" value="ECO:0000250"/>
    <property type="project" value="UniProtKB"/>
</dbReference>
<dbReference type="GO" id="GO:1990518">
    <property type="term" value="F:single-stranded 3'-5' DNA helicase activity"/>
    <property type="evidence" value="ECO:0000250"/>
    <property type="project" value="UniProtKB"/>
</dbReference>
<dbReference type="GO" id="GO:0003697">
    <property type="term" value="F:single-stranded DNA binding"/>
    <property type="evidence" value="ECO:0000250"/>
    <property type="project" value="UniProtKB"/>
</dbReference>
<dbReference type="GO" id="GO:0003727">
    <property type="term" value="F:single-stranded RNA binding"/>
    <property type="evidence" value="ECO:0000250"/>
    <property type="project" value="UniProtKB"/>
</dbReference>
<dbReference type="GO" id="GO:0003713">
    <property type="term" value="F:transcription coactivator activity"/>
    <property type="evidence" value="ECO:0000250"/>
    <property type="project" value="UniProtKB"/>
</dbReference>
<dbReference type="GO" id="GO:0045142">
    <property type="term" value="F:triplex DNA binding"/>
    <property type="evidence" value="ECO:0000250"/>
    <property type="project" value="UniProtKB"/>
</dbReference>
<dbReference type="GO" id="GO:0000380">
    <property type="term" value="P:alternative mRNA splicing, via spliceosome"/>
    <property type="evidence" value="ECO:0000250"/>
    <property type="project" value="UniProtKB"/>
</dbReference>
<dbReference type="GO" id="GO:0071360">
    <property type="term" value="P:cellular response to exogenous dsRNA"/>
    <property type="evidence" value="ECO:0000250"/>
    <property type="project" value="UniProtKB"/>
</dbReference>
<dbReference type="GO" id="GO:0006325">
    <property type="term" value="P:chromatin organization"/>
    <property type="evidence" value="ECO:0000250"/>
    <property type="project" value="UniProtKB"/>
</dbReference>
<dbReference type="GO" id="GO:0006260">
    <property type="term" value="P:DNA replication"/>
    <property type="evidence" value="ECO:0007669"/>
    <property type="project" value="UniProtKB-KW"/>
</dbReference>
<dbReference type="GO" id="GO:0006353">
    <property type="term" value="P:DNA-templated transcription termination"/>
    <property type="evidence" value="ECO:0007669"/>
    <property type="project" value="UniProtKB-KW"/>
</dbReference>
<dbReference type="GO" id="GO:0006954">
    <property type="term" value="P:inflammatory response"/>
    <property type="evidence" value="ECO:0007669"/>
    <property type="project" value="UniProtKB-KW"/>
</dbReference>
<dbReference type="GO" id="GO:0045087">
    <property type="term" value="P:innate immune response"/>
    <property type="evidence" value="ECO:0007669"/>
    <property type="project" value="UniProtKB-KW"/>
</dbReference>
<dbReference type="GO" id="GO:0035195">
    <property type="term" value="P:miRNA-mediated post-transcriptional gene silencing"/>
    <property type="evidence" value="ECO:0000250"/>
    <property type="project" value="UniProtKB"/>
</dbReference>
<dbReference type="GO" id="GO:0051028">
    <property type="term" value="P:mRNA transport"/>
    <property type="evidence" value="ECO:0007669"/>
    <property type="project" value="UniProtKB-KW"/>
</dbReference>
<dbReference type="GO" id="GO:2000767">
    <property type="term" value="P:positive regulation of cytoplasmic translation"/>
    <property type="evidence" value="ECO:0000250"/>
    <property type="project" value="UniProtKB"/>
</dbReference>
<dbReference type="GO" id="GO:0045739">
    <property type="term" value="P:positive regulation of DNA repair"/>
    <property type="evidence" value="ECO:0000250"/>
    <property type="project" value="UniProtKB"/>
</dbReference>
<dbReference type="GO" id="GO:0045740">
    <property type="term" value="P:positive regulation of DNA replication"/>
    <property type="evidence" value="ECO:0000250"/>
    <property type="project" value="UniProtKB"/>
</dbReference>
<dbReference type="GO" id="GO:0048146">
    <property type="term" value="P:positive regulation of fibroblast proliferation"/>
    <property type="evidence" value="ECO:0000250"/>
    <property type="project" value="UniProtKB"/>
</dbReference>
<dbReference type="GO" id="GO:0032727">
    <property type="term" value="P:positive regulation of interferon-alpha production"/>
    <property type="evidence" value="ECO:0000250"/>
    <property type="project" value="UniProtKB"/>
</dbReference>
<dbReference type="GO" id="GO:0032728">
    <property type="term" value="P:positive regulation of interferon-beta production"/>
    <property type="evidence" value="ECO:0000250"/>
    <property type="project" value="UniProtKB"/>
</dbReference>
<dbReference type="GO" id="GO:0032755">
    <property type="term" value="P:positive regulation of interleukin-6 production"/>
    <property type="evidence" value="ECO:0000250"/>
    <property type="project" value="UniProtKB"/>
</dbReference>
<dbReference type="GO" id="GO:0051092">
    <property type="term" value="P:positive regulation of NF-kappaB transcription factor activity"/>
    <property type="evidence" value="ECO:0000250"/>
    <property type="project" value="UniProtKB"/>
</dbReference>
<dbReference type="GO" id="GO:0060760">
    <property type="term" value="P:positive regulation of response to cytokine stimulus"/>
    <property type="evidence" value="ECO:0000250"/>
    <property type="project" value="UniProtKB"/>
</dbReference>
<dbReference type="GO" id="GO:0046833">
    <property type="term" value="P:positive regulation of RNA export from nucleus"/>
    <property type="evidence" value="ECO:0000250"/>
    <property type="project" value="UniProtKB"/>
</dbReference>
<dbReference type="GO" id="GO:0045944">
    <property type="term" value="P:positive regulation of transcription by RNA polymerase II"/>
    <property type="evidence" value="ECO:0000250"/>
    <property type="project" value="UniProtKB"/>
</dbReference>
<dbReference type="GO" id="GO:0032760">
    <property type="term" value="P:positive regulation of tumor necrosis factor production"/>
    <property type="evidence" value="ECO:0000250"/>
    <property type="project" value="UniProtKB"/>
</dbReference>
<dbReference type="GO" id="GO:2000765">
    <property type="term" value="P:regulation of cytoplasmic translation"/>
    <property type="evidence" value="ECO:0000250"/>
    <property type="project" value="UniProtKB"/>
</dbReference>
<dbReference type="GO" id="GO:0050684">
    <property type="term" value="P:regulation of mRNA processing"/>
    <property type="evidence" value="ECO:0000250"/>
    <property type="project" value="UniProtKB"/>
</dbReference>
<dbReference type="GO" id="GO:0048511">
    <property type="term" value="P:rhythmic process"/>
    <property type="evidence" value="ECO:0007669"/>
    <property type="project" value="UniProtKB-KW"/>
</dbReference>
<dbReference type="GO" id="GO:0070922">
    <property type="term" value="P:RISC complex assembly"/>
    <property type="evidence" value="ECO:0000250"/>
    <property type="project" value="UniProtKB"/>
</dbReference>
<dbReference type="CDD" id="cd17972">
    <property type="entry name" value="DEXHc_DHX9"/>
    <property type="match status" value="1"/>
</dbReference>
<dbReference type="CDD" id="cd19854">
    <property type="entry name" value="DSRM_DHX9_rpt1"/>
    <property type="match status" value="1"/>
</dbReference>
<dbReference type="CDD" id="cd19855">
    <property type="entry name" value="DSRM_DHX9_rpt2"/>
    <property type="match status" value="1"/>
</dbReference>
<dbReference type="CDD" id="cd18791">
    <property type="entry name" value="SF2_C_RHA"/>
    <property type="match status" value="1"/>
</dbReference>
<dbReference type="FunFam" id="3.30.160.20:FF:000026">
    <property type="entry name" value="ATP-dependent RNA helicase A"/>
    <property type="match status" value="1"/>
</dbReference>
<dbReference type="FunFam" id="3.30.160.20:FF:000028">
    <property type="entry name" value="ATP-dependent RNA helicase A"/>
    <property type="match status" value="1"/>
</dbReference>
<dbReference type="FunFam" id="3.40.50.300:FF:000677">
    <property type="entry name" value="ATP-dependent RNA helicase A"/>
    <property type="match status" value="1"/>
</dbReference>
<dbReference type="FunFam" id="1.20.120.1080:FF:000006">
    <property type="entry name" value="ATP-dependent RNA helicase A protein"/>
    <property type="match status" value="1"/>
</dbReference>
<dbReference type="FunFam" id="3.40.50.300:FF:000284">
    <property type="entry name" value="probable ATP-dependent RNA helicase YTHDC2"/>
    <property type="match status" value="1"/>
</dbReference>
<dbReference type="Gene3D" id="1.20.120.1080">
    <property type="match status" value="1"/>
</dbReference>
<dbReference type="Gene3D" id="3.30.160.20">
    <property type="match status" value="2"/>
</dbReference>
<dbReference type="Gene3D" id="3.40.50.300">
    <property type="entry name" value="P-loop containing nucleotide triphosphate hydrolases"/>
    <property type="match status" value="2"/>
</dbReference>
<dbReference type="InterPro" id="IPR011709">
    <property type="entry name" value="DEAD-box_helicase_OB_fold"/>
</dbReference>
<dbReference type="InterPro" id="IPR011545">
    <property type="entry name" value="DEAD/DEAH_box_helicase_dom"/>
</dbReference>
<dbReference type="InterPro" id="IPR044447">
    <property type="entry name" value="DHX9_DEXHc"/>
</dbReference>
<dbReference type="InterPro" id="IPR044445">
    <property type="entry name" value="DHX9_DSRM_1"/>
</dbReference>
<dbReference type="InterPro" id="IPR044446">
    <property type="entry name" value="DHX9_DSRM_2"/>
</dbReference>
<dbReference type="InterPro" id="IPR002464">
    <property type="entry name" value="DNA/RNA_helicase_DEAH_CS"/>
</dbReference>
<dbReference type="InterPro" id="IPR014720">
    <property type="entry name" value="dsRBD_dom"/>
</dbReference>
<dbReference type="InterPro" id="IPR048333">
    <property type="entry name" value="HA2_WH"/>
</dbReference>
<dbReference type="InterPro" id="IPR007502">
    <property type="entry name" value="Helicase-assoc_dom"/>
</dbReference>
<dbReference type="InterPro" id="IPR014001">
    <property type="entry name" value="Helicase_ATP-bd"/>
</dbReference>
<dbReference type="InterPro" id="IPR001650">
    <property type="entry name" value="Helicase_C-like"/>
</dbReference>
<dbReference type="InterPro" id="IPR027417">
    <property type="entry name" value="P-loop_NTPase"/>
</dbReference>
<dbReference type="PANTHER" id="PTHR18934">
    <property type="entry name" value="ATP-DEPENDENT RNA HELICASE"/>
    <property type="match status" value="1"/>
</dbReference>
<dbReference type="PANTHER" id="PTHR18934:SF119">
    <property type="entry name" value="ATP-DEPENDENT RNA HELICASE A"/>
    <property type="match status" value="1"/>
</dbReference>
<dbReference type="Pfam" id="PF00270">
    <property type="entry name" value="DEAD"/>
    <property type="match status" value="1"/>
</dbReference>
<dbReference type="Pfam" id="PF00035">
    <property type="entry name" value="dsrm"/>
    <property type="match status" value="2"/>
</dbReference>
<dbReference type="Pfam" id="PF21010">
    <property type="entry name" value="HA2_C"/>
    <property type="match status" value="1"/>
</dbReference>
<dbReference type="Pfam" id="PF04408">
    <property type="entry name" value="HA2_N"/>
    <property type="match status" value="1"/>
</dbReference>
<dbReference type="Pfam" id="PF00271">
    <property type="entry name" value="Helicase_C"/>
    <property type="match status" value="1"/>
</dbReference>
<dbReference type="Pfam" id="PF07717">
    <property type="entry name" value="OB_NTP_bind"/>
    <property type="match status" value="1"/>
</dbReference>
<dbReference type="SMART" id="SM00487">
    <property type="entry name" value="DEXDc"/>
    <property type="match status" value="1"/>
</dbReference>
<dbReference type="SMART" id="SM00358">
    <property type="entry name" value="DSRM"/>
    <property type="match status" value="2"/>
</dbReference>
<dbReference type="SMART" id="SM00847">
    <property type="entry name" value="HA2"/>
    <property type="match status" value="1"/>
</dbReference>
<dbReference type="SMART" id="SM00490">
    <property type="entry name" value="HELICc"/>
    <property type="match status" value="1"/>
</dbReference>
<dbReference type="SUPFAM" id="SSF54768">
    <property type="entry name" value="dsRNA-binding domain-like"/>
    <property type="match status" value="2"/>
</dbReference>
<dbReference type="SUPFAM" id="SSF52540">
    <property type="entry name" value="P-loop containing nucleoside triphosphate hydrolases"/>
    <property type="match status" value="1"/>
</dbReference>
<dbReference type="PROSITE" id="PS00690">
    <property type="entry name" value="DEAH_ATP_HELICASE"/>
    <property type="match status" value="1"/>
</dbReference>
<dbReference type="PROSITE" id="PS50137">
    <property type="entry name" value="DS_RBD"/>
    <property type="match status" value="2"/>
</dbReference>
<dbReference type="PROSITE" id="PS51192">
    <property type="entry name" value="HELICASE_ATP_BIND_1"/>
    <property type="match status" value="1"/>
</dbReference>
<dbReference type="PROSITE" id="PS51194">
    <property type="entry name" value="HELICASE_CTER"/>
    <property type="match status" value="1"/>
</dbReference>
<evidence type="ECO:0000250" key="1">
    <source>
        <dbReference type="UniProtKB" id="O70133"/>
    </source>
</evidence>
<evidence type="ECO:0000250" key="2">
    <source>
        <dbReference type="UniProtKB" id="Q08211"/>
    </source>
</evidence>
<evidence type="ECO:0000255" key="3"/>
<evidence type="ECO:0000255" key="4">
    <source>
        <dbReference type="PROSITE-ProRule" id="PRU00266"/>
    </source>
</evidence>
<evidence type="ECO:0000255" key="5">
    <source>
        <dbReference type="PROSITE-ProRule" id="PRU00541"/>
    </source>
</evidence>
<evidence type="ECO:0000255" key="6">
    <source>
        <dbReference type="PROSITE-ProRule" id="PRU00542"/>
    </source>
</evidence>
<evidence type="ECO:0000256" key="7">
    <source>
        <dbReference type="SAM" id="MobiDB-lite"/>
    </source>
</evidence>
<evidence type="ECO:0000305" key="8"/>
<proteinExistence type="evidence at protein level"/>
<keyword id="KW-0007">Acetylation</keyword>
<keyword id="KW-0010">Activator</keyword>
<keyword id="KW-0067">ATP-binding</keyword>
<keyword id="KW-0090">Biological rhythms</keyword>
<keyword id="KW-0963">Cytoplasm</keyword>
<keyword id="KW-0206">Cytoskeleton</keyword>
<keyword id="KW-0235">DNA replication</keyword>
<keyword id="KW-0238">DNA-binding</keyword>
<keyword id="KW-0347">Helicase</keyword>
<keyword id="KW-0378">Hydrolase</keyword>
<keyword id="KW-0391">Immunity</keyword>
<keyword id="KW-0395">Inflammatory response</keyword>
<keyword id="KW-0399">Innate immunity</keyword>
<keyword id="KW-1017">Isopeptide bond</keyword>
<keyword id="KW-0464">Manganese</keyword>
<keyword id="KW-0479">Metal-binding</keyword>
<keyword id="KW-0488">Methylation</keyword>
<keyword id="KW-0507">mRNA processing</keyword>
<keyword id="KW-0508">mRNA splicing</keyword>
<keyword id="KW-0509">mRNA transport</keyword>
<keyword id="KW-0547">Nucleotide-binding</keyword>
<keyword id="KW-0539">Nucleus</keyword>
<keyword id="KW-0597">Phosphoprotein</keyword>
<keyword id="KW-1185">Reference proteome</keyword>
<keyword id="KW-0677">Repeat</keyword>
<keyword id="KW-0694">RNA-binding</keyword>
<keyword id="KW-0943">RNA-mediated gene silencing</keyword>
<keyword id="KW-0804">Transcription</keyword>
<keyword id="KW-0805">Transcription regulation</keyword>
<keyword id="KW-0806">Transcription termination</keyword>
<keyword id="KW-0810">Translation regulation</keyword>
<keyword id="KW-0813">Transport</keyword>
<keyword id="KW-0832">Ubl conjugation</keyword>
<name>DHX9_BOVIN</name>
<organism>
    <name type="scientific">Bos taurus</name>
    <name type="common">Bovine</name>
    <dbReference type="NCBI Taxonomy" id="9913"/>
    <lineage>
        <taxon>Eukaryota</taxon>
        <taxon>Metazoa</taxon>
        <taxon>Chordata</taxon>
        <taxon>Craniata</taxon>
        <taxon>Vertebrata</taxon>
        <taxon>Euteleostomi</taxon>
        <taxon>Mammalia</taxon>
        <taxon>Eutheria</taxon>
        <taxon>Laurasiatheria</taxon>
        <taxon>Artiodactyla</taxon>
        <taxon>Ruminantia</taxon>
        <taxon>Pecora</taxon>
        <taxon>Bovidae</taxon>
        <taxon>Bovinae</taxon>
        <taxon>Bos</taxon>
    </lineage>
</organism>
<accession>Q28141</accession>
<reference key="1">
    <citation type="journal article" date="1995" name="J. Biol. Chem.">
        <title>Molecular cloning of the gene encoding nuclear DNA helicase II. A bovine homologue of human RNA helicase A and Drosophila Mle protein.</title>
        <authorList>
            <person name="Zhang S."/>
            <person name="Maacke H."/>
            <person name="Grosse F."/>
        </authorList>
    </citation>
    <scope>NUCLEOTIDE SEQUENCE [MRNA]</scope>
    <source>
        <tissue>Thymus</tissue>
    </source>
</reference>
<reference key="2">
    <citation type="journal article" date="1994" name="Biochemistry">
        <title>Nuclear DNA helicase II unwinds both DNA and RNA.</title>
        <authorList>
            <person name="Zhang S."/>
            <person name="Grosse F."/>
        </authorList>
    </citation>
    <scope>FUNCTION AS AN ATP-DEPENDENT HELICASE</scope>
    <scope>DNA-BINDING</scope>
    <scope>RNA-BINDING</scope>
</reference>
<sequence>MGDVKNFLYAWCGKRKMTPSYEIRAVGNKNRQKFMCEVRVEGYNYTGMGNSTNKKDAQSNAARDFVNYLVRINELKSEEVPAVGVAPPTPSATDSSDTTAEDGGVPGNLGGPLPPHLTLQAENNSGGGGSGYVPTWDRGANLKDYYSRKEEQEVQATLESEEVDLNAGLHGNWTLENAKARLNQYFQKEKIQGEYKYTQVGPDHNRSFIAEMTIYIKQIGRRIFAREHGSNKKLAAQSCALSLVRQLYHLGVIEPYSGLTKKKEGETVEPYKVNLSQDLEHQLQNIVQELNLEIVPIPEDPSVPVALNLGKLAQFEPSQRQNPVGVVPWSPPQSNWNPWTSSNIDEGPLAYATPEQISMDLKNELMYQLEQDRDLQAVLQERELLPVKKFESEILEAISQNPVVIIRGATGCGKTTQVPQFILDDCIQNDRAAECNIVVTQPRRISAVSVAERVAYERGEEPGKSCGYSVRFESILPRPHASIMFCTVGVLLRKLEAGIRGISHVIVDEIHERDINTDFLLVVLRDVVQAYPEVRIVLMSATIDTSMFCEYFFNCPIIEVYGRTFPVQEYFLEDCIQMTHFVPPPKDKKKKDKDDDGGEDDDANCNLICGDEYGAETRISMAQLNEKETPFELIEALLLYIETLNVPGAVLVFLPGWNLIYTMQKHLEMNPHFGSHRYQILPLHSQIPREEQRKVFDPVPSGVTKIILSTNIAETSITINDVVYVIDSCKQKVKLFTAHNNMTNYATVWASKTNLEQRKGRAGRVRPGFCFHLCSRARFERLETHMTPEMFRTPLHEIALSIKLLRLGGIGQFLAKAIEPPPLDAVIEAEHTLRELDALDANDELTPLGRILAKLPIEPRFGKMMIMGCIFYVGDAICTISAATCFPEPFISEGKRLGYIHRNFAGNRFSDHVALLSVFQAWDDARMGGEEAEIRFCEHKRLNMATLRMTWEAKVQLKEILINSGFPEECLLTQVFTNTGPDNNLDVVISLLAFGVYPNVCYHKEKRKILTTEGRNALIHKSSVNCPFSSQDMKYPSPFFVFGEKIRTRAISAKGMTLVTPLQLLLFASKKVQSDGQLVLVDDWIRLQISHEAAACITALRAAMEALVVEVTKQPGIISQLDPVNERMLNTIRQISRPSAAGINLMIGTTRYGDGPRPPKMARYDNGSGYRRGGSSYSGGGYGLGGYGTGGYGGGGGYGGRGGYSGGGYGGGSNSFRGSYVGGGGGVGGGGGGFRGLSRGGYRGMSGGDYRGESGGGYRGSGGFQRGGGRGGYGGGYFGQGRGGGGY</sequence>
<comment type="function">
    <text evidence="2">Multifunctional ATP-dependent nucleic acid helicase that unwinds DNA and RNA in a 3' to 5' direction and that plays important roles in many processes, such as DNA replication, transcriptional activation, post-transcriptional RNA regulation, mRNA translation and RNA-mediated gene silencing (PubMed:7511411). Requires a 3'-single-stranded tail as entry site for acid nuclei unwinding activities as well as the binding and hydrolyzing of any of the four ribo- or deoxyribo-nucleotide triphosphates (NTPs) (PubMed:7511411). Unwinds numerous nucleic acid substrates such as double-stranded (ds) DNA and RNA, DNA:RNA hybrids, DNA and RNA forks composed of either partially complementary DNA duplexes or DNA:RNA hybrids, respectively, and also DNA and RNA displacement loops (D- and R-loops), triplex-helical DNA (H-DNA) structure and DNA and RNA-based G-quadruplexes (PubMed:7511411). Binds dsDNA, single-stranded DNA (ssDNA), dsRNA, ssRNA and poly(A)-containing RNA (PubMed:7511411). Also binds to circular dsDNA or dsRNA of either linear and/or circular forms and stimulates the relaxation of supercoiled DNAs catalyzed by topoisomerase TOP2A. Plays a role in DNA replication at origins of replication and cell cycle progression. Plays a role as a transcriptional coactivator acting as a bridging factor between polymerase II holoenzyme and transcription factors or cofactors, such as BRCA1, CREBBP, RELA and SMN1. Binds to the CDKN2A promoter. Plays several roles in post-transcriptional regulation of gene expression. In cooperation with NUP98, promotes pre-mRNA alternative splicing activities of a subset of genes. As component of a large PER complex, is involved in the negative regulation of 3' transcriptional termination of circadian target genes such as PER1 and NR1D1 and the control of the circadian rhythms. Also acts as a nuclear resolvase that is able to bind and neutralize harmful massive secondary double-stranded RNA structures formed by inverted-repeat Alu retrotransposon elements that are inserted and transcribed as parts of genes during the process of gene transposition. Involved in the positive regulation of nuclear export of constitutive transport element (CTE)-containing unspliced mRNA. Component of the coding region determinant (CRD)-mediated complex that promotes cytoplasmic MYC mRNA stability. Plays a role in mRNA translation. Positively regulates translation of selected mRNAs through its binding to post-transcriptional control element (PCE) in the 5'-untranslated region (UTR). Involved with LARP6 in the translation stimulation of type I collagen mRNAs for CO1A1 and CO1A2 through binding of a specific stem-loop structure in their 5'-UTRs. Stimulates LIN28A-dependent mRNA translation probably by facilitating ribonucleoprotein remodeling during the process of translation. Also plays a role as a small interfering (siRNA)-loading factor involved in the RNA-induced silencing complex (RISC) loading complex (RLC) assembly, and hence functions in the RISC-mediated gene silencing process. Binds preferentially to short double-stranded RNA, such as those produced during rotavirus intestinal infection. This interaction may mediate NLRP9 inflammasome activation and trigger inflammatory response, including IL18 release and pyroptosis. Finally, mediates the attachment of heterogeneous nuclear ribonucleoproteins (hnRNPs) to actin filaments in the nucleus.</text>
</comment>
<comment type="catalytic activity">
    <reaction evidence="2">
        <text>ATP + H2O = ADP + phosphate + H(+)</text>
        <dbReference type="Rhea" id="RHEA:13065"/>
        <dbReference type="ChEBI" id="CHEBI:15377"/>
        <dbReference type="ChEBI" id="CHEBI:15378"/>
        <dbReference type="ChEBI" id="CHEBI:30616"/>
        <dbReference type="ChEBI" id="CHEBI:43474"/>
        <dbReference type="ChEBI" id="CHEBI:456216"/>
        <dbReference type="EC" id="3.6.4.13"/>
    </reaction>
</comment>
<comment type="subunit">
    <text evidence="2">Component of the coding region determinant (CRD)-mediated complex, composed of DHX9, HNRNPU, IGF2BP1, SYNCRIP and YBX1. Identified in a mRNP complex, at least composed of DHX9, DDX3X, ELAVL1, HNRNPU, IGF2BP1, ILF3, PABPC1, PCBP2, PTBP2, STAU1, STAU2, SYNCRIP and YBX1. Identified in a IGF2BP1-dependent mRNP granule complex containing untranslated mRNAs. The large PER complex involved in the repression of transcriptional termination is composed of at least PER2, CDK9, DDX5, DHX9, NCBP1 and POLR2A (active). Associates (via DRBM domains) with the RISC complex; this association occurs in a small interfering (siRNA)-dependent manner. Associates with the SMN complex; this association induces recruitment of DHX9 to the RNA polymerase II. Associates with polysomes in a LIN28A-dependent manner. Interacts (via C-terminus) with ACTB; this interaction is direct and mediates the attachment to nuclear ribonucleoprotein complexes. Interacts with ADAR isoform 1; this interaction occurs in a RNA-independent manner. Interacts (via DRBM domains) with AGO2 (via middle region); this interaction promotes active RISC assembly by promoting the association of siRNA with AGO2. Interacts (via NTD domain) with AKAP8L (via N-terminus). Interacts with BRCA1 (via C-terminus); this interaction is direct and links BRCA1 to the RNA polymerase II holoenzyme. Interacts (via N-terminus) with CREBBP; this interaction mediates association with RNA polymerase II holoenzyme and stimulates CREB-dependent transcriptional activation. Interacts (via N-terminus) with EIF2AK2/PKR; this interaction is dependent upon the activation of the kinase. Interacts (via DRBM domains) with DICER1. Interacts with H2AX; this interaction is direct, requires phosphorylation of histone H2AX by PRKDC and promotes binding of DHX9 to transcriptionally stalled sites on chromosomal DNA in response to genotoxic stress. Interacts with HNRNPC; this interaction is direct, enhanced probably by their concomitant binding to RNA and mediates the attachment to actin filaments. Interacts (via NTD domain) with PRMT1. Interacts with IGF2BP1. Interacts with IGF2BP2, IGF2BP3. Interacts (via DRBM domains) with ILF3; this interaction occurs in a RNA-independent manner. Interacts with Importin alpha/Importin beta receptor. Interacts with LARP6 (via C-terminus); this interaction occurs in a mRNA-independent manner. Interacts (via N- and C-terminus) with LIN28A (via C-terminus); this interaction occurs in a RNA-independent manner. Interacts with LMX1B. Interacts (via helicase C-terminal domain, HA2 and OB-fold regions) with MAVS (via CARD domain); this interaction occurs in both resting and double-stranded RNA poly(I:C)-induced cells. Interacts with MBD2; this interaction stimulates transcriptional activation in a CREB-dependent manner. Interacts (via H2A and OB-fold regions) with MYD88 (via TIR domain); this interaction is direct. Interacts with NLRP9 upon rotavirus infection; this interaction may trigger NLRP9 inflammasome activation and inflammatory response. Interacts (via DRBM, OB-fold and RGG regions) with NUP98 (via N-terminus); this interaction occurs in a RNA-dependent manner and stimulates DHX9-mediated ATPase activity and regulates transcription and splicing of a subset of genes. Interacts (via N-terminus) with NXF1 (via N-terminus); this interaction is direct and negatively regulates NXF1-mediated nuclear export of constitutive transport element (CTE)-containing cellular mRNAs. Interacts with RELA; this interaction is direct and activates NF-kappa-B-mediated transcription. Interacts (via MTAD region) with RNA polymerase II holoenzyme; this interaction stimulates transcription activation in a CREB-dependent manner. Interacts (via RGG region) with SMN1; this interaction links SMN1 to the RNA polymerase II holoenzyme (ref.8). Interacts with SP7. Interacts (via DRBM domains) with TARBP2 (via DRBM first and second domains); this interaction occurs in a small interfering (siRNA)-dependent manner. Interacts with TOP2A; this interaction occurs in a E2 enzyme UBE2I- and RNA-dependent manner, negatively regulates DHX9-mediated double-stranded DNA and RNA duplex helicase activity and stimulates TOP2A-mediated supercoiled DNA relaxation activity. Interacts (via DRBM domains and C-terminus) with WRN (via 3'-5' exonuclease domain); this interaction inhibits the DNA-dependent NTPase and DNA helicase activities of DHX9 and stimulates the 3'-5' exonuclease activity of WRN. Interacts with XRCC5; this interaction occurs in a RNA-dependent manner. Interacts with ZIC2 (via C2H2-type domain 3). Interacts with MCM3AP (By similarity).</text>
</comment>
<comment type="subcellular location">
    <subcellularLocation>
        <location evidence="2">Nucleus</location>
    </subcellularLocation>
    <subcellularLocation>
        <location evidence="2">Nucleus</location>
        <location evidence="2">Nucleoplasm</location>
    </subcellularLocation>
    <subcellularLocation>
        <location evidence="2">Nucleus</location>
        <location evidence="2">Nucleolus</location>
    </subcellularLocation>
    <subcellularLocation>
        <location evidence="2">Cytoplasm</location>
    </subcellularLocation>
    <subcellularLocation>
        <location evidence="2">Cytoplasm</location>
        <location evidence="2">Cytoskeleton</location>
        <location evidence="2">Microtubule organizing center</location>
        <location evidence="2">Centrosome</location>
    </subcellularLocation>
    <text evidence="2">Nucleoplasmic shuttling protein. Its nuclear import involves the nucleocytoplasmic transport receptor Importin alpha/Importin beta receptor pathway in a Ran-dependent manner. In interphase, localizes in nuclear stress granules and at perichromatin fibrils and in cytoplasmic ribonucleoprotein granules. Colocalizes with WRN and H2AX at centrosomes in a microtubule-dependent manner following DNA damaging agent treatment. Excluded from the mitotic nucleus as early as prophase and re-entered the nucleus at telophase. Recruited in diffuse and discrete intranuclear foci (GLFG-body) in a NUP98-dependent manner. Colocalizes with SP7 in the nucleus. Colocalizes with ACTB at nuclear actin filaments inside the nucleus or at the nuclear pore. Colocalizes with HNRNPC at nuclear ribonucleoprotein complex proteins in the nucleus. Localized in cytoplasmic mRNP granules containing untranslated mRNAs.</text>
</comment>
<comment type="domain">
    <text evidence="2">DRBM domains cooperate for the binding to nucleic acid but not for unwinding helicase activity. The helicase-associated domain-2 (HA2) region is essential for the duplex RNA unwinding helicase activity. The minimal transactivation region (MTAD) mediates interaction with the RNA polymerase II holoenzyme and stimulates transcriptional activation in a CREB-dependent manner. The oligonucleotide- or oligosaccharide-binding (OB-fold) and the repeated arginine and glycine-glycine (RGG) regions are dispensable for both RNA-binding and unwinding helicase activities. The RGG region contains both nuclear localization signal (NLS) and nuclear export signal (NES) and is necessary and sufficient for nucleocytoplasmic shuttling in a RNA-independent manner.</text>
</comment>
<comment type="PTM">
    <text evidence="2">Methylated. PRMT1-mediated methylation of undefined Arg residues in the nuclear transport domain (NTD) is required for nuclear import of DHX9.</text>
</comment>
<comment type="PTM">
    <text evidence="2">Phosphorylated by PRKDC; phosphorylation occurs in a RNA-dependent manner. Phosphorylated by EIF2AK2/PKR; this phosphorylation reduces its association with double-stranded RNA.</text>
</comment>
<comment type="similarity">
    <text evidence="8">Belongs to the DEAD box helicase family. DEAH subfamily.</text>
</comment>